<protein>
    <recommendedName>
        <fullName evidence="1">Biotin synthase</fullName>
        <ecNumber evidence="1">2.8.1.6</ecNumber>
    </recommendedName>
</protein>
<comment type="function">
    <text evidence="1">Catalyzes the conversion of dethiobiotin (DTB) to biotin by the insertion of a sulfur atom into dethiobiotin via a radical-based mechanism.</text>
</comment>
<comment type="catalytic activity">
    <reaction evidence="1">
        <text>(4R,5S)-dethiobiotin + (sulfur carrier)-SH + 2 reduced [2Fe-2S]-[ferredoxin] + 2 S-adenosyl-L-methionine = (sulfur carrier)-H + biotin + 2 5'-deoxyadenosine + 2 L-methionine + 2 oxidized [2Fe-2S]-[ferredoxin]</text>
        <dbReference type="Rhea" id="RHEA:22060"/>
        <dbReference type="Rhea" id="RHEA-COMP:10000"/>
        <dbReference type="Rhea" id="RHEA-COMP:10001"/>
        <dbReference type="Rhea" id="RHEA-COMP:14737"/>
        <dbReference type="Rhea" id="RHEA-COMP:14739"/>
        <dbReference type="ChEBI" id="CHEBI:17319"/>
        <dbReference type="ChEBI" id="CHEBI:29917"/>
        <dbReference type="ChEBI" id="CHEBI:33737"/>
        <dbReference type="ChEBI" id="CHEBI:33738"/>
        <dbReference type="ChEBI" id="CHEBI:57586"/>
        <dbReference type="ChEBI" id="CHEBI:57844"/>
        <dbReference type="ChEBI" id="CHEBI:59789"/>
        <dbReference type="ChEBI" id="CHEBI:64428"/>
        <dbReference type="ChEBI" id="CHEBI:149473"/>
        <dbReference type="EC" id="2.8.1.6"/>
    </reaction>
</comment>
<comment type="cofactor">
    <cofactor evidence="1">
        <name>[4Fe-4S] cluster</name>
        <dbReference type="ChEBI" id="CHEBI:49883"/>
    </cofactor>
    <text evidence="1">Binds 1 [4Fe-4S] cluster. The cluster is coordinated with 3 cysteines and an exchangeable S-adenosyl-L-methionine.</text>
</comment>
<comment type="cofactor">
    <cofactor evidence="1">
        <name>[2Fe-2S] cluster</name>
        <dbReference type="ChEBI" id="CHEBI:190135"/>
    </cofactor>
    <text evidence="1">Binds 1 [2Fe-2S] cluster. The cluster is coordinated with 3 cysteines and 1 arginine.</text>
</comment>
<comment type="pathway">
    <text evidence="1">Cofactor biosynthesis; biotin biosynthesis; biotin from 7,8-diaminononanoate: step 2/2.</text>
</comment>
<comment type="subunit">
    <text evidence="1">Homodimer.</text>
</comment>
<comment type="similarity">
    <text evidence="1">Belongs to the radical SAM superfamily. Biotin synthase family.</text>
</comment>
<gene>
    <name evidence="1" type="primary">bioB</name>
    <name type="ordered locus">Mkms_3133</name>
</gene>
<proteinExistence type="inferred from homology"/>
<name>BIOB_MYCSK</name>
<keyword id="KW-0001">2Fe-2S</keyword>
<keyword id="KW-0004">4Fe-4S</keyword>
<keyword id="KW-0093">Biotin biosynthesis</keyword>
<keyword id="KW-0408">Iron</keyword>
<keyword id="KW-0411">Iron-sulfur</keyword>
<keyword id="KW-0479">Metal-binding</keyword>
<keyword id="KW-0949">S-adenosyl-L-methionine</keyword>
<keyword id="KW-0808">Transferase</keyword>
<organism>
    <name type="scientific">Mycobacterium sp. (strain KMS)</name>
    <dbReference type="NCBI Taxonomy" id="189918"/>
    <lineage>
        <taxon>Bacteria</taxon>
        <taxon>Bacillati</taxon>
        <taxon>Actinomycetota</taxon>
        <taxon>Actinomycetes</taxon>
        <taxon>Mycobacteriales</taxon>
        <taxon>Mycobacteriaceae</taxon>
        <taxon>Mycobacterium</taxon>
    </lineage>
</organism>
<sequence length="331" mass="35821">MSDILAVAREQVLERGVGLNQDQTLQVLQLPDDRLDDLLALAHEVRMAWCGPDVEVEGIISLKTGGCPEDCHFCSQSGLFASPVRSAWLDVPSLVEAAKQTAKTGATEFCIVAAVRGPDERLLAQVAAGIEAIRNEVDIQIACSLGMLTAEQVERLSEMGVHRYNHNLETARSFFTNVVTTHTWEERWDTLRMVREAGMEVCCGGILGMGETLEQRAEFAANLAELDPHEVPLNFLNPRPGTPFGDLEVLPAAEALKAVAAFRLALPRTMLRFAGGREITLGDLGAKKGILGGINAVIVGNYLTTLGRPAEADLELLDDLQMPIKALNASL</sequence>
<feature type="chain" id="PRO_0000381484" description="Biotin synthase">
    <location>
        <begin position="1"/>
        <end position="331"/>
    </location>
</feature>
<feature type="domain" description="Radical SAM core" evidence="2">
    <location>
        <begin position="52"/>
        <end position="277"/>
    </location>
</feature>
<feature type="binding site" evidence="1">
    <location>
        <position position="67"/>
    </location>
    <ligand>
        <name>[4Fe-4S] cluster</name>
        <dbReference type="ChEBI" id="CHEBI:49883"/>
        <note>4Fe-4S-S-AdoMet</note>
    </ligand>
</feature>
<feature type="binding site" evidence="1">
    <location>
        <position position="71"/>
    </location>
    <ligand>
        <name>[4Fe-4S] cluster</name>
        <dbReference type="ChEBI" id="CHEBI:49883"/>
        <note>4Fe-4S-S-AdoMet</note>
    </ligand>
</feature>
<feature type="binding site" evidence="1">
    <location>
        <position position="74"/>
    </location>
    <ligand>
        <name>[4Fe-4S] cluster</name>
        <dbReference type="ChEBI" id="CHEBI:49883"/>
        <note>4Fe-4S-S-AdoMet</note>
    </ligand>
</feature>
<feature type="binding site" evidence="1">
    <location>
        <position position="110"/>
    </location>
    <ligand>
        <name>[2Fe-2S] cluster</name>
        <dbReference type="ChEBI" id="CHEBI:190135"/>
    </ligand>
</feature>
<feature type="binding site" evidence="1">
    <location>
        <position position="143"/>
    </location>
    <ligand>
        <name>[2Fe-2S] cluster</name>
        <dbReference type="ChEBI" id="CHEBI:190135"/>
    </ligand>
</feature>
<feature type="binding site" evidence="1">
    <location>
        <position position="202"/>
    </location>
    <ligand>
        <name>[2Fe-2S] cluster</name>
        <dbReference type="ChEBI" id="CHEBI:190135"/>
    </ligand>
</feature>
<feature type="binding site" evidence="1">
    <location>
        <position position="272"/>
    </location>
    <ligand>
        <name>[2Fe-2S] cluster</name>
        <dbReference type="ChEBI" id="CHEBI:190135"/>
    </ligand>
</feature>
<reference key="1">
    <citation type="submission" date="2006-12" db="EMBL/GenBank/DDBJ databases">
        <title>Complete sequence of chromosome of Mycobacterium sp. KMS.</title>
        <authorList>
            <consortium name="US DOE Joint Genome Institute"/>
            <person name="Copeland A."/>
            <person name="Lucas S."/>
            <person name="Lapidus A."/>
            <person name="Barry K."/>
            <person name="Detter J.C."/>
            <person name="Glavina del Rio T."/>
            <person name="Hammon N."/>
            <person name="Israni S."/>
            <person name="Dalin E."/>
            <person name="Tice H."/>
            <person name="Pitluck S."/>
            <person name="Kiss H."/>
            <person name="Brettin T."/>
            <person name="Bruce D."/>
            <person name="Han C."/>
            <person name="Tapia R."/>
            <person name="Gilna P."/>
            <person name="Schmutz J."/>
            <person name="Larimer F."/>
            <person name="Land M."/>
            <person name="Hauser L."/>
            <person name="Kyrpides N."/>
            <person name="Mikhailova N."/>
            <person name="Miller C.D."/>
            <person name="Richardson P."/>
        </authorList>
    </citation>
    <scope>NUCLEOTIDE SEQUENCE [LARGE SCALE GENOMIC DNA]</scope>
    <source>
        <strain>KMS</strain>
    </source>
</reference>
<accession>A1UHL9</accession>
<dbReference type="EC" id="2.8.1.6" evidence="1"/>
<dbReference type="EMBL" id="CP000518">
    <property type="protein sequence ID" value="ABL92327.1"/>
    <property type="molecule type" value="Genomic_DNA"/>
</dbReference>
<dbReference type="SMR" id="A1UHL9"/>
<dbReference type="STRING" id="189918.Mkms_3133"/>
<dbReference type="KEGG" id="mkm:Mkms_3133"/>
<dbReference type="HOGENOM" id="CLU_033172_2_1_11"/>
<dbReference type="OrthoDB" id="9786826at2"/>
<dbReference type="UniPathway" id="UPA00078">
    <property type="reaction ID" value="UER00162"/>
</dbReference>
<dbReference type="GO" id="GO:0051537">
    <property type="term" value="F:2 iron, 2 sulfur cluster binding"/>
    <property type="evidence" value="ECO:0007669"/>
    <property type="project" value="UniProtKB-KW"/>
</dbReference>
<dbReference type="GO" id="GO:0051539">
    <property type="term" value="F:4 iron, 4 sulfur cluster binding"/>
    <property type="evidence" value="ECO:0007669"/>
    <property type="project" value="UniProtKB-KW"/>
</dbReference>
<dbReference type="GO" id="GO:0004076">
    <property type="term" value="F:biotin synthase activity"/>
    <property type="evidence" value="ECO:0007669"/>
    <property type="project" value="UniProtKB-UniRule"/>
</dbReference>
<dbReference type="GO" id="GO:0005506">
    <property type="term" value="F:iron ion binding"/>
    <property type="evidence" value="ECO:0007669"/>
    <property type="project" value="UniProtKB-UniRule"/>
</dbReference>
<dbReference type="GO" id="GO:0009102">
    <property type="term" value="P:biotin biosynthetic process"/>
    <property type="evidence" value="ECO:0007669"/>
    <property type="project" value="UniProtKB-UniRule"/>
</dbReference>
<dbReference type="CDD" id="cd01335">
    <property type="entry name" value="Radical_SAM"/>
    <property type="match status" value="1"/>
</dbReference>
<dbReference type="FunFam" id="3.20.20.70:FF:000026">
    <property type="entry name" value="Biotin synthase"/>
    <property type="match status" value="1"/>
</dbReference>
<dbReference type="Gene3D" id="3.20.20.70">
    <property type="entry name" value="Aldolase class I"/>
    <property type="match status" value="1"/>
</dbReference>
<dbReference type="HAMAP" id="MF_01694">
    <property type="entry name" value="BioB"/>
    <property type="match status" value="1"/>
</dbReference>
<dbReference type="InterPro" id="IPR013785">
    <property type="entry name" value="Aldolase_TIM"/>
</dbReference>
<dbReference type="InterPro" id="IPR010722">
    <property type="entry name" value="BATS_dom"/>
</dbReference>
<dbReference type="InterPro" id="IPR002684">
    <property type="entry name" value="Biotin_synth/BioAB"/>
</dbReference>
<dbReference type="InterPro" id="IPR024177">
    <property type="entry name" value="Biotin_synthase"/>
</dbReference>
<dbReference type="InterPro" id="IPR006638">
    <property type="entry name" value="Elp3/MiaA/NifB-like_rSAM"/>
</dbReference>
<dbReference type="InterPro" id="IPR007197">
    <property type="entry name" value="rSAM"/>
</dbReference>
<dbReference type="NCBIfam" id="TIGR00433">
    <property type="entry name" value="bioB"/>
    <property type="match status" value="1"/>
</dbReference>
<dbReference type="PANTHER" id="PTHR22976">
    <property type="entry name" value="BIOTIN SYNTHASE"/>
    <property type="match status" value="1"/>
</dbReference>
<dbReference type="PANTHER" id="PTHR22976:SF2">
    <property type="entry name" value="BIOTIN SYNTHASE, MITOCHONDRIAL"/>
    <property type="match status" value="1"/>
</dbReference>
<dbReference type="Pfam" id="PF06968">
    <property type="entry name" value="BATS"/>
    <property type="match status" value="1"/>
</dbReference>
<dbReference type="Pfam" id="PF04055">
    <property type="entry name" value="Radical_SAM"/>
    <property type="match status" value="1"/>
</dbReference>
<dbReference type="PIRSF" id="PIRSF001619">
    <property type="entry name" value="Biotin_synth"/>
    <property type="match status" value="1"/>
</dbReference>
<dbReference type="SFLD" id="SFLDG01082">
    <property type="entry name" value="B12-binding_domain_containing"/>
    <property type="match status" value="1"/>
</dbReference>
<dbReference type="SFLD" id="SFLDG01278">
    <property type="entry name" value="biotin_synthase_like"/>
    <property type="match status" value="1"/>
</dbReference>
<dbReference type="SFLD" id="SFLDS00029">
    <property type="entry name" value="Radical_SAM"/>
    <property type="match status" value="1"/>
</dbReference>
<dbReference type="SMART" id="SM00876">
    <property type="entry name" value="BATS"/>
    <property type="match status" value="1"/>
</dbReference>
<dbReference type="SMART" id="SM00729">
    <property type="entry name" value="Elp3"/>
    <property type="match status" value="1"/>
</dbReference>
<dbReference type="SUPFAM" id="SSF102114">
    <property type="entry name" value="Radical SAM enzymes"/>
    <property type="match status" value="1"/>
</dbReference>
<dbReference type="PROSITE" id="PS51918">
    <property type="entry name" value="RADICAL_SAM"/>
    <property type="match status" value="1"/>
</dbReference>
<evidence type="ECO:0000255" key="1">
    <source>
        <dbReference type="HAMAP-Rule" id="MF_01694"/>
    </source>
</evidence>
<evidence type="ECO:0000255" key="2">
    <source>
        <dbReference type="PROSITE-ProRule" id="PRU01266"/>
    </source>
</evidence>